<sequence length="1379" mass="153396">MAQTLSFNGRRRVRKFFGKIPEVAEMPNLIEVQKASYDQFLMVEEPKGGRPDEGLQAVFKSVFPITDFSGASMLEFVSYEFEPPKFDVDECRQRDLTYAAPLKVTLRLIVFDIDEDTGAKSIKDIKEQSVYMGDMPLMTNNGTFIVNGTERVIVSQMHRSPGVFFDHDKGKSHSSGKLLFAARVIPYRGSWLDIEFDAKDIVYARIDRRRKIPVTSLLMALGMDGEEILDTFYTKSLYKRDGEGWRIPFKPETLKGAKAITEMVDADTGEVVVEAGKKLTPRLLRTLSDKGLKALKAADDDLYGNYLAGDIVNYSTGEIYLEAGDEIDEKTLGIILANGFDEIPVLGIDHINVGAYIRNTLTADKNENRQDALFDIYRVMRPGEPPTMESAEAMFNSLFFDAERYDLSAVGRVKMNMRLDLTVEDTVRILRKDDILAVVRMLVELRDGKGEIDDIDNLGNRRVRSVGELMENQYRLGLLRMERAIKERMSSIEIDTVMPQDLINAKPAAAAVREFFGSSQLSQFMDQVNPLSEITHKRRLSALGPGGLTRERAGFEVRDVHPTHYGRICPIETPEGPNIGLINSLATFARVNKYGFIESPYRRIVDGKVTSDVLYLSAMEEAKYYVAQANAEMNADGSFVDEFVVCRHAGEVMLAPRDSMNLMDVSPKQVVSVAAALIPFLENDDANRALMGSNMQRQAVPLLRAEAPFVGTGMEPVVARDSGAAIGARRGGVVDQVDATRIVIRATEDLEAGKSGVDIYRLQKFQRSNQNTCVNQRPLVTVGDEVNRGDILADGPSTDLGDLALGRNALVAFMPWNGYNYEDSILLSERIVADDVFTSIHIEEFEVMARDTKLGPEEITRDIPNVSEEALKNLDEAGIVYIGAEVQPGDILVGKITPKGESPMTPEEKLLRAIFGEKASDVRDTSMRMPPGTYGTIVEVRVFNRHGVEKDERAMAIEREEIERLAKDRDDEQAILDRNVYGRLIEMLRGQASIAGPKGFKKGSELSNAVVSEYPRSQWWMFAVEDEKVQSELEALRGQYDESKSRLEQRFMDKVEKVQRGDEMPPGVMKMVKVFVAVKRKIQPGDKMAGRHGNKGVVSRIVPVEDMPFLEDGTHVDVVLNPLGVPSRMNVGQILETHLGWACAGMGRQIGELIEAYKANGNIEPLRKTIGDVVGDGPKAEQVHEFDDDSVLRLADQWKRGVSIATPVFDGANEADVNDMLRLAGLKDSGQSTLYDGRTGEQFDRQVTVGYIYMLKLNHLVDDKIHARSIGPYSLVTQQPLGGKAQFGGQRFGEMEVWALEAYGAAYTLQEMLTVKSDDVAGRTKVYEAIVRGDDTFEAGIPESFNVLVKEMRSLGLSVELENTKLDEAQAAQLPDAAE</sequence>
<proteinExistence type="inferred from homology"/>
<accession>Q1MIE9</accession>
<feature type="chain" id="PRO_0000300383" description="DNA-directed RNA polymerase subunit beta">
    <location>
        <begin position="1"/>
        <end position="1379"/>
    </location>
</feature>
<reference key="1">
    <citation type="journal article" date="2006" name="Genome Biol.">
        <title>The genome of Rhizobium leguminosarum has recognizable core and accessory components.</title>
        <authorList>
            <person name="Young J.P.W."/>
            <person name="Crossman L.C."/>
            <person name="Johnston A.W.B."/>
            <person name="Thomson N.R."/>
            <person name="Ghazoui Z.F."/>
            <person name="Hull K.H."/>
            <person name="Wexler M."/>
            <person name="Curson A.R.J."/>
            <person name="Todd J.D."/>
            <person name="Poole P.S."/>
            <person name="Mauchline T.H."/>
            <person name="East A.K."/>
            <person name="Quail M.A."/>
            <person name="Churcher C."/>
            <person name="Arrowsmith C."/>
            <person name="Cherevach I."/>
            <person name="Chillingworth T."/>
            <person name="Clarke K."/>
            <person name="Cronin A."/>
            <person name="Davis P."/>
            <person name="Fraser A."/>
            <person name="Hance Z."/>
            <person name="Hauser H."/>
            <person name="Jagels K."/>
            <person name="Moule S."/>
            <person name="Mungall K."/>
            <person name="Norbertczak H."/>
            <person name="Rabbinowitsch E."/>
            <person name="Sanders M."/>
            <person name="Simmonds M."/>
            <person name="Whitehead S."/>
            <person name="Parkhill J."/>
        </authorList>
    </citation>
    <scope>NUCLEOTIDE SEQUENCE [LARGE SCALE GENOMIC DNA]</scope>
    <source>
        <strain>DSM 114642 / LMG 32736 / 3841</strain>
    </source>
</reference>
<protein>
    <recommendedName>
        <fullName evidence="1">DNA-directed RNA polymerase subunit beta</fullName>
        <shortName evidence="1">RNAP subunit beta</shortName>
        <ecNumber evidence="1">2.7.7.6</ecNumber>
    </recommendedName>
    <alternativeName>
        <fullName evidence="1">RNA polymerase subunit beta</fullName>
    </alternativeName>
    <alternativeName>
        <fullName evidence="1">Transcriptase subunit beta</fullName>
    </alternativeName>
</protein>
<evidence type="ECO:0000255" key="1">
    <source>
        <dbReference type="HAMAP-Rule" id="MF_01321"/>
    </source>
</evidence>
<name>RPOB_RHIJ3</name>
<organism>
    <name type="scientific">Rhizobium johnstonii (strain DSM 114642 / LMG 32736 / 3841)</name>
    <name type="common">Rhizobium leguminosarum bv. viciae</name>
    <dbReference type="NCBI Taxonomy" id="216596"/>
    <lineage>
        <taxon>Bacteria</taxon>
        <taxon>Pseudomonadati</taxon>
        <taxon>Pseudomonadota</taxon>
        <taxon>Alphaproteobacteria</taxon>
        <taxon>Hyphomicrobiales</taxon>
        <taxon>Rhizobiaceae</taxon>
        <taxon>Rhizobium/Agrobacterium group</taxon>
        <taxon>Rhizobium</taxon>
        <taxon>Rhizobium johnstonii</taxon>
    </lineage>
</organism>
<dbReference type="EC" id="2.7.7.6" evidence="1"/>
<dbReference type="EMBL" id="AM236080">
    <property type="protein sequence ID" value="CAK07261.1"/>
    <property type="molecule type" value="Genomic_DNA"/>
</dbReference>
<dbReference type="RefSeq" id="WP_011651419.1">
    <property type="nucleotide sequence ID" value="NC_008380.1"/>
</dbReference>
<dbReference type="SMR" id="Q1MIE9"/>
<dbReference type="EnsemblBacteria" id="CAK07261">
    <property type="protein sequence ID" value="CAK07261"/>
    <property type="gene ID" value="RL1766"/>
</dbReference>
<dbReference type="KEGG" id="rle:RL1766"/>
<dbReference type="eggNOG" id="COG0085">
    <property type="taxonomic scope" value="Bacteria"/>
</dbReference>
<dbReference type="HOGENOM" id="CLU_000524_4_3_5"/>
<dbReference type="Proteomes" id="UP000006575">
    <property type="component" value="Chromosome"/>
</dbReference>
<dbReference type="GO" id="GO:0000428">
    <property type="term" value="C:DNA-directed RNA polymerase complex"/>
    <property type="evidence" value="ECO:0007669"/>
    <property type="project" value="UniProtKB-KW"/>
</dbReference>
<dbReference type="GO" id="GO:0003677">
    <property type="term" value="F:DNA binding"/>
    <property type="evidence" value="ECO:0007669"/>
    <property type="project" value="UniProtKB-UniRule"/>
</dbReference>
<dbReference type="GO" id="GO:0003899">
    <property type="term" value="F:DNA-directed RNA polymerase activity"/>
    <property type="evidence" value="ECO:0007669"/>
    <property type="project" value="UniProtKB-UniRule"/>
</dbReference>
<dbReference type="GO" id="GO:0032549">
    <property type="term" value="F:ribonucleoside binding"/>
    <property type="evidence" value="ECO:0007669"/>
    <property type="project" value="InterPro"/>
</dbReference>
<dbReference type="GO" id="GO:0006351">
    <property type="term" value="P:DNA-templated transcription"/>
    <property type="evidence" value="ECO:0007669"/>
    <property type="project" value="UniProtKB-UniRule"/>
</dbReference>
<dbReference type="CDD" id="cd00653">
    <property type="entry name" value="RNA_pol_B_RPB2"/>
    <property type="match status" value="1"/>
</dbReference>
<dbReference type="FunFam" id="2.40.50.100:FF:000006">
    <property type="entry name" value="DNA-directed RNA polymerase subunit beta"/>
    <property type="match status" value="1"/>
</dbReference>
<dbReference type="FunFam" id="3.90.1800.10:FF:000001">
    <property type="entry name" value="DNA-directed RNA polymerase subunit beta"/>
    <property type="match status" value="1"/>
</dbReference>
<dbReference type="Gene3D" id="2.40.50.100">
    <property type="match status" value="1"/>
</dbReference>
<dbReference type="Gene3D" id="2.40.50.150">
    <property type="match status" value="1"/>
</dbReference>
<dbReference type="Gene3D" id="3.90.1100.10">
    <property type="match status" value="2"/>
</dbReference>
<dbReference type="Gene3D" id="2.30.150.10">
    <property type="entry name" value="DNA-directed RNA polymerase, beta subunit, external 1 domain"/>
    <property type="match status" value="1"/>
</dbReference>
<dbReference type="Gene3D" id="2.40.270.10">
    <property type="entry name" value="DNA-directed RNA polymerase, subunit 2, domain 6"/>
    <property type="match status" value="2"/>
</dbReference>
<dbReference type="Gene3D" id="3.90.1800.10">
    <property type="entry name" value="RNA polymerase alpha subunit dimerisation domain"/>
    <property type="match status" value="1"/>
</dbReference>
<dbReference type="Gene3D" id="3.90.1110.10">
    <property type="entry name" value="RNA polymerase Rpb2, domain 2"/>
    <property type="match status" value="2"/>
</dbReference>
<dbReference type="HAMAP" id="MF_01321">
    <property type="entry name" value="RNApol_bact_RpoB"/>
    <property type="match status" value="1"/>
</dbReference>
<dbReference type="InterPro" id="IPR042107">
    <property type="entry name" value="DNA-dir_RNA_pol_bsu_ext_1_sf"/>
</dbReference>
<dbReference type="InterPro" id="IPR019462">
    <property type="entry name" value="DNA-dir_RNA_pol_bsu_external_1"/>
</dbReference>
<dbReference type="InterPro" id="IPR015712">
    <property type="entry name" value="DNA-dir_RNA_pol_su2"/>
</dbReference>
<dbReference type="InterPro" id="IPR007120">
    <property type="entry name" value="DNA-dir_RNAP_su2_dom"/>
</dbReference>
<dbReference type="InterPro" id="IPR037033">
    <property type="entry name" value="DNA-dir_RNAP_su2_hyb_sf"/>
</dbReference>
<dbReference type="InterPro" id="IPR010243">
    <property type="entry name" value="RNA_pol_bsu_bac"/>
</dbReference>
<dbReference type="InterPro" id="IPR007121">
    <property type="entry name" value="RNA_pol_bsu_CS"/>
</dbReference>
<dbReference type="InterPro" id="IPR007644">
    <property type="entry name" value="RNA_pol_bsu_protrusion"/>
</dbReference>
<dbReference type="InterPro" id="IPR007642">
    <property type="entry name" value="RNA_pol_Rpb2_2"/>
</dbReference>
<dbReference type="InterPro" id="IPR037034">
    <property type="entry name" value="RNA_pol_Rpb2_2_sf"/>
</dbReference>
<dbReference type="InterPro" id="IPR007645">
    <property type="entry name" value="RNA_pol_Rpb2_3"/>
</dbReference>
<dbReference type="InterPro" id="IPR007641">
    <property type="entry name" value="RNA_pol_Rpb2_7"/>
</dbReference>
<dbReference type="InterPro" id="IPR014724">
    <property type="entry name" value="RNA_pol_RPB2_OB-fold"/>
</dbReference>
<dbReference type="NCBIfam" id="NF001616">
    <property type="entry name" value="PRK00405.1"/>
    <property type="match status" value="1"/>
</dbReference>
<dbReference type="NCBIfam" id="TIGR02013">
    <property type="entry name" value="rpoB"/>
    <property type="match status" value="1"/>
</dbReference>
<dbReference type="PANTHER" id="PTHR20856">
    <property type="entry name" value="DNA-DIRECTED RNA POLYMERASE I SUBUNIT 2"/>
    <property type="match status" value="1"/>
</dbReference>
<dbReference type="Pfam" id="PF04563">
    <property type="entry name" value="RNA_pol_Rpb2_1"/>
    <property type="match status" value="1"/>
</dbReference>
<dbReference type="Pfam" id="PF04561">
    <property type="entry name" value="RNA_pol_Rpb2_2"/>
    <property type="match status" value="2"/>
</dbReference>
<dbReference type="Pfam" id="PF04565">
    <property type="entry name" value="RNA_pol_Rpb2_3"/>
    <property type="match status" value="1"/>
</dbReference>
<dbReference type="Pfam" id="PF10385">
    <property type="entry name" value="RNA_pol_Rpb2_45"/>
    <property type="match status" value="1"/>
</dbReference>
<dbReference type="Pfam" id="PF00562">
    <property type="entry name" value="RNA_pol_Rpb2_6"/>
    <property type="match status" value="1"/>
</dbReference>
<dbReference type="Pfam" id="PF04560">
    <property type="entry name" value="RNA_pol_Rpb2_7"/>
    <property type="match status" value="1"/>
</dbReference>
<dbReference type="SUPFAM" id="SSF64484">
    <property type="entry name" value="beta and beta-prime subunits of DNA dependent RNA-polymerase"/>
    <property type="match status" value="1"/>
</dbReference>
<dbReference type="PROSITE" id="PS01166">
    <property type="entry name" value="RNA_POL_BETA"/>
    <property type="match status" value="1"/>
</dbReference>
<comment type="function">
    <text evidence="1">DNA-dependent RNA polymerase catalyzes the transcription of DNA into RNA using the four ribonucleoside triphosphates as substrates.</text>
</comment>
<comment type="catalytic activity">
    <reaction evidence="1">
        <text>RNA(n) + a ribonucleoside 5'-triphosphate = RNA(n+1) + diphosphate</text>
        <dbReference type="Rhea" id="RHEA:21248"/>
        <dbReference type="Rhea" id="RHEA-COMP:14527"/>
        <dbReference type="Rhea" id="RHEA-COMP:17342"/>
        <dbReference type="ChEBI" id="CHEBI:33019"/>
        <dbReference type="ChEBI" id="CHEBI:61557"/>
        <dbReference type="ChEBI" id="CHEBI:140395"/>
        <dbReference type="EC" id="2.7.7.6"/>
    </reaction>
</comment>
<comment type="subunit">
    <text evidence="1">The RNAP catalytic core consists of 2 alpha, 1 beta, 1 beta' and 1 omega subunit. When a sigma factor is associated with the core the holoenzyme is formed, which can initiate transcription.</text>
</comment>
<comment type="similarity">
    <text evidence="1">Belongs to the RNA polymerase beta chain family.</text>
</comment>
<keyword id="KW-0240">DNA-directed RNA polymerase</keyword>
<keyword id="KW-0548">Nucleotidyltransferase</keyword>
<keyword id="KW-0804">Transcription</keyword>
<keyword id="KW-0808">Transferase</keyword>
<gene>
    <name evidence="1" type="primary">rpoB</name>
    <name type="ordered locus">RL1766</name>
</gene>